<comment type="function">
    <text evidence="1">Master enzyme that delivers sulfur to a number of partners involved in Fe-S cluster assembly, tRNA modification or cofactor biosynthesis. Catalyzes the removal of elemental sulfur atoms from cysteine to produce alanine. Functions as a sulfur delivery protein for Fe-S cluster synthesis onto IscU, an Fe-S scaffold assembly protein, as well as other S acceptor proteins.</text>
</comment>
<comment type="catalytic activity">
    <reaction evidence="1">
        <text>(sulfur carrier)-H + L-cysteine = (sulfur carrier)-SH + L-alanine</text>
        <dbReference type="Rhea" id="RHEA:43892"/>
        <dbReference type="Rhea" id="RHEA-COMP:14737"/>
        <dbReference type="Rhea" id="RHEA-COMP:14739"/>
        <dbReference type="ChEBI" id="CHEBI:29917"/>
        <dbReference type="ChEBI" id="CHEBI:35235"/>
        <dbReference type="ChEBI" id="CHEBI:57972"/>
        <dbReference type="ChEBI" id="CHEBI:64428"/>
        <dbReference type="EC" id="2.8.1.7"/>
    </reaction>
</comment>
<comment type="cofactor">
    <cofactor evidence="1">
        <name>pyridoxal 5'-phosphate</name>
        <dbReference type="ChEBI" id="CHEBI:597326"/>
    </cofactor>
</comment>
<comment type="pathway">
    <text evidence="1">Cofactor biosynthesis; iron-sulfur cluster biosynthesis.</text>
</comment>
<comment type="subunit">
    <text evidence="1">Homodimer. Forms a heterotetramer with IscU, interacts with other sulfur acceptors.</text>
</comment>
<comment type="subcellular location">
    <subcellularLocation>
        <location evidence="1">Cytoplasm</location>
    </subcellularLocation>
</comment>
<comment type="similarity">
    <text evidence="1">Belongs to the class-V pyridoxal-phosphate-dependent aminotransferase family. NifS/IscS subfamily.</text>
</comment>
<dbReference type="EC" id="2.8.1.7" evidence="1"/>
<dbReference type="EMBL" id="CP001581">
    <property type="protein sequence ID" value="ACO85763.1"/>
    <property type="molecule type" value="Genomic_DNA"/>
</dbReference>
<dbReference type="SMR" id="C1FTC4"/>
<dbReference type="KEGG" id="cby:CLM_2875"/>
<dbReference type="eggNOG" id="COG1104">
    <property type="taxonomic scope" value="Bacteria"/>
</dbReference>
<dbReference type="HOGENOM" id="CLU_003433_0_0_9"/>
<dbReference type="UniPathway" id="UPA00266"/>
<dbReference type="Proteomes" id="UP000001374">
    <property type="component" value="Chromosome"/>
</dbReference>
<dbReference type="GO" id="GO:1990221">
    <property type="term" value="C:L-cysteine desulfurase complex"/>
    <property type="evidence" value="ECO:0007669"/>
    <property type="project" value="UniProtKB-ARBA"/>
</dbReference>
<dbReference type="GO" id="GO:0051537">
    <property type="term" value="F:2 iron, 2 sulfur cluster binding"/>
    <property type="evidence" value="ECO:0007669"/>
    <property type="project" value="UniProtKB-UniRule"/>
</dbReference>
<dbReference type="GO" id="GO:0031071">
    <property type="term" value="F:cysteine desulfurase activity"/>
    <property type="evidence" value="ECO:0007669"/>
    <property type="project" value="UniProtKB-UniRule"/>
</dbReference>
<dbReference type="GO" id="GO:0046872">
    <property type="term" value="F:metal ion binding"/>
    <property type="evidence" value="ECO:0007669"/>
    <property type="project" value="UniProtKB-KW"/>
</dbReference>
<dbReference type="GO" id="GO:0030170">
    <property type="term" value="F:pyridoxal phosphate binding"/>
    <property type="evidence" value="ECO:0007669"/>
    <property type="project" value="UniProtKB-UniRule"/>
</dbReference>
<dbReference type="GO" id="GO:0044571">
    <property type="term" value="P:[2Fe-2S] cluster assembly"/>
    <property type="evidence" value="ECO:0007669"/>
    <property type="project" value="UniProtKB-UniRule"/>
</dbReference>
<dbReference type="GO" id="GO:0006520">
    <property type="term" value="P:amino acid metabolic process"/>
    <property type="evidence" value="ECO:0007669"/>
    <property type="project" value="InterPro"/>
</dbReference>
<dbReference type="FunFam" id="3.40.640.10:FF:000003">
    <property type="entry name" value="Cysteine desulfurase IscS"/>
    <property type="match status" value="1"/>
</dbReference>
<dbReference type="Gene3D" id="1.10.260.50">
    <property type="match status" value="1"/>
</dbReference>
<dbReference type="Gene3D" id="3.90.1150.10">
    <property type="entry name" value="Aspartate Aminotransferase, domain 1"/>
    <property type="match status" value="1"/>
</dbReference>
<dbReference type="Gene3D" id="3.40.640.10">
    <property type="entry name" value="Type I PLP-dependent aspartate aminotransferase-like (Major domain)"/>
    <property type="match status" value="1"/>
</dbReference>
<dbReference type="HAMAP" id="MF_00331">
    <property type="entry name" value="Cys_desulf_IscS"/>
    <property type="match status" value="1"/>
</dbReference>
<dbReference type="InterPro" id="IPR000192">
    <property type="entry name" value="Aminotrans_V_dom"/>
</dbReference>
<dbReference type="InterPro" id="IPR020578">
    <property type="entry name" value="Aminotrans_V_PyrdxlP_BS"/>
</dbReference>
<dbReference type="InterPro" id="IPR010240">
    <property type="entry name" value="Cys_deSase_IscS"/>
</dbReference>
<dbReference type="InterPro" id="IPR017772">
    <property type="entry name" value="Cys_deSase_NifS_bac/arc"/>
</dbReference>
<dbReference type="InterPro" id="IPR016454">
    <property type="entry name" value="Cysteine_dSase"/>
</dbReference>
<dbReference type="InterPro" id="IPR015424">
    <property type="entry name" value="PyrdxlP-dep_Trfase"/>
</dbReference>
<dbReference type="InterPro" id="IPR015421">
    <property type="entry name" value="PyrdxlP-dep_Trfase_major"/>
</dbReference>
<dbReference type="InterPro" id="IPR015422">
    <property type="entry name" value="PyrdxlP-dep_Trfase_small"/>
</dbReference>
<dbReference type="NCBIfam" id="TIGR03402">
    <property type="entry name" value="FeS_nifS"/>
    <property type="match status" value="1"/>
</dbReference>
<dbReference type="NCBIfam" id="NF002806">
    <property type="entry name" value="PRK02948.1"/>
    <property type="match status" value="1"/>
</dbReference>
<dbReference type="PANTHER" id="PTHR11601:SF34">
    <property type="entry name" value="CYSTEINE DESULFURASE"/>
    <property type="match status" value="1"/>
</dbReference>
<dbReference type="PANTHER" id="PTHR11601">
    <property type="entry name" value="CYSTEINE DESULFURYLASE FAMILY MEMBER"/>
    <property type="match status" value="1"/>
</dbReference>
<dbReference type="Pfam" id="PF00266">
    <property type="entry name" value="Aminotran_5"/>
    <property type="match status" value="1"/>
</dbReference>
<dbReference type="PIRSF" id="PIRSF005572">
    <property type="entry name" value="NifS"/>
    <property type="match status" value="1"/>
</dbReference>
<dbReference type="SUPFAM" id="SSF53383">
    <property type="entry name" value="PLP-dependent transferases"/>
    <property type="match status" value="1"/>
</dbReference>
<dbReference type="PROSITE" id="PS00595">
    <property type="entry name" value="AA_TRANSFER_CLASS_5"/>
    <property type="match status" value="1"/>
</dbReference>
<sequence length="397" mass="44108">MNKQVYMDYSATTYTKPEVLEEMLPFFTENFGNPSSLYSFSDKTKKAVNLARERVSKALNAEKNEIFFTSGGSEADNWALKGIAYANKKKGNHIITTKIEHHAILHTAQFLEKEGFKVTYLPVDEEGFVSVEDIKNAITDETILVSVMFANNEIGTIEPIKEIGELCKEKNIYFHTDAVQAIGHVDIDVKDMNIDLLSMSAHKFYGPKGVGALYIKNGVKIQNLIHGGGQERGKRASTEDTAGIVGLGKAIELAMENMPEENEKLSNLRGRLIRGIEARIPEVKLNGPKDMSRRLPNNVNFSFIGIEGETLLLDLDMNGIFGSTGSACASASLDPSHVLLSIGLPHETAHGSLRLSLGAKNTEEDIDYVLEVLPKIIKQRREMSPLWEDYMKNKEEK</sequence>
<keyword id="KW-0001">2Fe-2S</keyword>
<keyword id="KW-0963">Cytoplasm</keyword>
<keyword id="KW-0408">Iron</keyword>
<keyword id="KW-0411">Iron-sulfur</keyword>
<keyword id="KW-0479">Metal-binding</keyword>
<keyword id="KW-0663">Pyridoxal phosphate</keyword>
<keyword id="KW-0808">Transferase</keyword>
<proteinExistence type="inferred from homology"/>
<gene>
    <name evidence="1" type="primary">iscS</name>
    <name type="ordered locus">CLM_2875</name>
</gene>
<feature type="chain" id="PRO_1000133113" description="Cysteine desulfurase IscS">
    <location>
        <begin position="1"/>
        <end position="397"/>
    </location>
</feature>
<feature type="active site" description="Cysteine persulfide intermediate" evidence="1">
    <location>
        <position position="328"/>
    </location>
</feature>
<feature type="binding site" evidence="1">
    <location>
        <begin position="72"/>
        <end position="73"/>
    </location>
    <ligand>
        <name>pyridoxal 5'-phosphate</name>
        <dbReference type="ChEBI" id="CHEBI:597326"/>
    </ligand>
</feature>
<feature type="binding site" evidence="1">
    <location>
        <position position="152"/>
    </location>
    <ligand>
        <name>pyridoxal 5'-phosphate</name>
        <dbReference type="ChEBI" id="CHEBI:597326"/>
    </ligand>
</feature>
<feature type="binding site" evidence="1">
    <location>
        <position position="180"/>
    </location>
    <ligand>
        <name>pyridoxal 5'-phosphate</name>
        <dbReference type="ChEBI" id="CHEBI:597326"/>
    </ligand>
</feature>
<feature type="binding site" evidence="1">
    <location>
        <begin position="200"/>
        <end position="202"/>
    </location>
    <ligand>
        <name>pyridoxal 5'-phosphate</name>
        <dbReference type="ChEBI" id="CHEBI:597326"/>
    </ligand>
</feature>
<feature type="binding site" evidence="1">
    <location>
        <position position="238"/>
    </location>
    <ligand>
        <name>pyridoxal 5'-phosphate</name>
        <dbReference type="ChEBI" id="CHEBI:597326"/>
    </ligand>
</feature>
<feature type="binding site" description="via persulfide group" evidence="1">
    <location>
        <position position="328"/>
    </location>
    <ligand>
        <name>[2Fe-2S] cluster</name>
        <dbReference type="ChEBI" id="CHEBI:190135"/>
        <note>ligand shared with IscU</note>
    </ligand>
</feature>
<feature type="modified residue" description="N6-(pyridoxal phosphate)lysine" evidence="1">
    <location>
        <position position="203"/>
    </location>
</feature>
<organism>
    <name type="scientific">Clostridium botulinum (strain Kyoto / Type A2)</name>
    <dbReference type="NCBI Taxonomy" id="536232"/>
    <lineage>
        <taxon>Bacteria</taxon>
        <taxon>Bacillati</taxon>
        <taxon>Bacillota</taxon>
        <taxon>Clostridia</taxon>
        <taxon>Eubacteriales</taxon>
        <taxon>Clostridiaceae</taxon>
        <taxon>Clostridium</taxon>
    </lineage>
</organism>
<protein>
    <recommendedName>
        <fullName evidence="1">Cysteine desulfurase IscS</fullName>
        <ecNumber evidence="1">2.8.1.7</ecNumber>
    </recommendedName>
</protein>
<reference key="1">
    <citation type="submission" date="2008-10" db="EMBL/GenBank/DDBJ databases">
        <title>Genome sequence of Clostridium botulinum A2 Kyoto.</title>
        <authorList>
            <person name="Shrivastava S."/>
            <person name="Brinkac L.M."/>
            <person name="Brown J.L."/>
            <person name="Bruce D."/>
            <person name="Detter C.C."/>
            <person name="Johnson E.A."/>
            <person name="Munk C.A."/>
            <person name="Smith L.A."/>
            <person name="Smith T.J."/>
            <person name="Sutton G."/>
            <person name="Brettin T.S."/>
        </authorList>
    </citation>
    <scope>NUCLEOTIDE SEQUENCE [LARGE SCALE GENOMIC DNA]</scope>
    <source>
        <strain>Kyoto / Type A2</strain>
    </source>
</reference>
<name>ISCS_CLOBJ</name>
<evidence type="ECO:0000255" key="1">
    <source>
        <dbReference type="HAMAP-Rule" id="MF_00331"/>
    </source>
</evidence>
<accession>C1FTC4</accession>